<feature type="chain" id="PRO_0000262568" description="Thymocyte nuclear protein 1">
    <location>
        <begin position="1"/>
        <end position="231"/>
    </location>
</feature>
<feature type="region of interest" description="Disordered" evidence="2">
    <location>
        <begin position="1"/>
        <end position="54"/>
    </location>
</feature>
<feature type="short sequence motif" description="Nuclear localization signal" evidence="1">
    <location>
        <begin position="4"/>
        <end position="11"/>
    </location>
</feature>
<feature type="compositionally biased region" description="Basic and acidic residues" evidence="2">
    <location>
        <begin position="14"/>
        <end position="24"/>
    </location>
</feature>
<feature type="compositionally biased region" description="Basic and acidic residues" evidence="2">
    <location>
        <begin position="45"/>
        <end position="54"/>
    </location>
</feature>
<sequence>MPPRKTRSSAKSNKHSDADAHLNEGSDDVAQRKTGKRKRSAAVKGDVENKNDDDACKPSYSRWLMKSEPESRIENGVDVKFGIEDLKALPNQTGCWDGVRNYQARNFMREMKVGQQAFFYHSNCKEPGIAGLMKIVKEAYVDHTQFDKKDVHYDPSSKADNPKWHMVDVQFERMVKRFIPLAELKKYHLEHRVKGGPLKDMALFTRARLSVQPLTAEEFEFVLSLENEDPI</sequence>
<keyword id="KW-0539">Nucleus</keyword>
<keyword id="KW-0597">Phosphoprotein</keyword>
<keyword id="KW-1185">Reference proteome</keyword>
<organism>
    <name type="scientific">Danio rerio</name>
    <name type="common">Zebrafish</name>
    <name type="synonym">Brachydanio rerio</name>
    <dbReference type="NCBI Taxonomy" id="7955"/>
    <lineage>
        <taxon>Eukaryota</taxon>
        <taxon>Metazoa</taxon>
        <taxon>Chordata</taxon>
        <taxon>Craniata</taxon>
        <taxon>Vertebrata</taxon>
        <taxon>Euteleostomi</taxon>
        <taxon>Actinopterygii</taxon>
        <taxon>Neopterygii</taxon>
        <taxon>Teleostei</taxon>
        <taxon>Ostariophysi</taxon>
        <taxon>Cypriniformes</taxon>
        <taxon>Danionidae</taxon>
        <taxon>Danioninae</taxon>
        <taxon>Danio</taxon>
    </lineage>
</organism>
<reference key="1">
    <citation type="submission" date="2003-09" db="EMBL/GenBank/DDBJ databases">
        <authorList>
            <consortium name="NIH - Zebrafish Gene Collection (ZGC) project"/>
        </authorList>
    </citation>
    <scope>NUCLEOTIDE SEQUENCE [LARGE SCALE MRNA]</scope>
    <source>
        <strain>SJD</strain>
    </source>
</reference>
<evidence type="ECO:0000250" key="1"/>
<evidence type="ECO:0000256" key="2">
    <source>
        <dbReference type="SAM" id="MobiDB-lite"/>
    </source>
</evidence>
<protein>
    <recommendedName>
        <fullName>Thymocyte nuclear protein 1</fullName>
    </recommendedName>
</protein>
<accession>Q6PFL8</accession>
<name>THYN1_DANRE</name>
<proteinExistence type="evidence at transcript level"/>
<comment type="function">
    <text evidence="1">Specifically binds 5-hydroxymethylcytosine (5hmC), suggesting that it acts as a specific reader of 5hmC.</text>
</comment>
<comment type="subcellular location">
    <subcellularLocation>
        <location evidence="1">Nucleus</location>
    </subcellularLocation>
</comment>
<comment type="PTM">
    <text evidence="1">Phosphorylated.</text>
</comment>
<dbReference type="EMBL" id="BC057500">
    <property type="protein sequence ID" value="AAH57500.1"/>
    <property type="molecule type" value="mRNA"/>
</dbReference>
<dbReference type="SMR" id="Q6PFL8"/>
<dbReference type="FunCoup" id="Q6PFL8">
    <property type="interactions" value="687"/>
</dbReference>
<dbReference type="STRING" id="7955.ENSDARP00000062575"/>
<dbReference type="PaxDb" id="7955-ENSDARP00000062575"/>
<dbReference type="AGR" id="ZFIN:ZDB-GENE-040426-1585"/>
<dbReference type="ZFIN" id="ZDB-GENE-040426-1585">
    <property type="gene designation" value="thyn1"/>
</dbReference>
<dbReference type="eggNOG" id="KOG3383">
    <property type="taxonomic scope" value="Eukaryota"/>
</dbReference>
<dbReference type="InParanoid" id="Q6PFL8"/>
<dbReference type="PhylomeDB" id="Q6PFL8"/>
<dbReference type="PRO" id="PR:Q6PFL8"/>
<dbReference type="Proteomes" id="UP000000437">
    <property type="component" value="Unplaced"/>
</dbReference>
<dbReference type="GO" id="GO:0005634">
    <property type="term" value="C:nucleus"/>
    <property type="evidence" value="ECO:0000318"/>
    <property type="project" value="GO_Central"/>
</dbReference>
<dbReference type="CDD" id="cd21133">
    <property type="entry name" value="EVE"/>
    <property type="match status" value="1"/>
</dbReference>
<dbReference type="FunFam" id="3.10.590.10:FF:000003">
    <property type="entry name" value="Thymocyte nuclear protein 1"/>
    <property type="match status" value="1"/>
</dbReference>
<dbReference type="Gene3D" id="3.10.590.10">
    <property type="entry name" value="ph1033 like domains"/>
    <property type="match status" value="1"/>
</dbReference>
<dbReference type="InterPro" id="IPR052181">
    <property type="entry name" value="5hmC_binding"/>
</dbReference>
<dbReference type="InterPro" id="IPR002740">
    <property type="entry name" value="EVE_domain"/>
</dbReference>
<dbReference type="InterPro" id="IPR015947">
    <property type="entry name" value="PUA-like_sf"/>
</dbReference>
<dbReference type="InterPro" id="IPR047197">
    <property type="entry name" value="THYN1-like_EVE"/>
</dbReference>
<dbReference type="PANTHER" id="PTHR14087">
    <property type="entry name" value="THYMOCYTE NUCLEAR PROTEIN 1"/>
    <property type="match status" value="1"/>
</dbReference>
<dbReference type="PANTHER" id="PTHR14087:SF7">
    <property type="entry name" value="THYMOCYTE NUCLEAR PROTEIN 1"/>
    <property type="match status" value="1"/>
</dbReference>
<dbReference type="Pfam" id="PF01878">
    <property type="entry name" value="EVE"/>
    <property type="match status" value="1"/>
</dbReference>
<dbReference type="SUPFAM" id="SSF88697">
    <property type="entry name" value="PUA domain-like"/>
    <property type="match status" value="1"/>
</dbReference>
<gene>
    <name type="primary">thyn1</name>
    <name type="ORF">zgc:66269</name>
</gene>